<protein>
    <recommendedName>
        <fullName evidence="1">Biotin synthase</fullName>
        <ecNumber evidence="1">2.8.1.6</ecNumber>
    </recommendedName>
</protein>
<reference key="1">
    <citation type="journal article" date="2009" name="Genome Res.">
        <title>Newly introduced genomic prophage islands are critical determinants of in vivo competitiveness in the Liverpool epidemic strain of Pseudomonas aeruginosa.</title>
        <authorList>
            <person name="Winstanley C."/>
            <person name="Langille M.G.I."/>
            <person name="Fothergill J.L."/>
            <person name="Kukavica-Ibrulj I."/>
            <person name="Paradis-Bleau C."/>
            <person name="Sanschagrin F."/>
            <person name="Thomson N.R."/>
            <person name="Winsor G.L."/>
            <person name="Quail M.A."/>
            <person name="Lennard N."/>
            <person name="Bignell A."/>
            <person name="Clarke L."/>
            <person name="Seeger K."/>
            <person name="Saunders D."/>
            <person name="Harris D."/>
            <person name="Parkhill J."/>
            <person name="Hancock R.E.W."/>
            <person name="Brinkman F.S.L."/>
            <person name="Levesque R.C."/>
        </authorList>
    </citation>
    <scope>NUCLEOTIDE SEQUENCE [LARGE SCALE GENOMIC DNA]</scope>
    <source>
        <strain>LESB58</strain>
    </source>
</reference>
<organism>
    <name type="scientific">Pseudomonas aeruginosa (strain LESB58)</name>
    <dbReference type="NCBI Taxonomy" id="557722"/>
    <lineage>
        <taxon>Bacteria</taxon>
        <taxon>Pseudomonadati</taxon>
        <taxon>Pseudomonadota</taxon>
        <taxon>Gammaproteobacteria</taxon>
        <taxon>Pseudomonadales</taxon>
        <taxon>Pseudomonadaceae</taxon>
        <taxon>Pseudomonas</taxon>
    </lineage>
</organism>
<sequence length="352" mass="39114">MSATASVATRHDWSLAEVRALFEQPFNDLLFQAQTVHRAHFDPNRVQVSTLLSIKTGACPEDCKYCPQSGHYNTGLDKEKLMEVQKVLEAAAEAKAIGSTRFCMGAAWKHPSAKDMPYVLEMVKGVKKLGLETCMTLGRLTQEQTQALADAGLDYYNHNLDTSPEFYGNIITTRTYSERLQTLAYVREAGMKICSGGILGMGESVDDRAGLLIQLANLPEHPESVPINMLVKVKGTPLAEEKDVDPFDFIRTLAVARIMMPKSHVRLSAGREQMNEQMQALAFMAGANSIFYGEKLLTTKNPQAEKDMQLFARLGIKPEEREEHADEVHQAAIEQALVEQRESKLFYNAASA</sequence>
<dbReference type="EC" id="2.8.1.6" evidence="1"/>
<dbReference type="EMBL" id="FM209186">
    <property type="protein sequence ID" value="CAW25223.1"/>
    <property type="molecule type" value="Genomic_DNA"/>
</dbReference>
<dbReference type="RefSeq" id="WP_003103330.1">
    <property type="nucleotide sequence ID" value="NC_011770.1"/>
</dbReference>
<dbReference type="SMR" id="B7V485"/>
<dbReference type="KEGG" id="pag:PLES_04961"/>
<dbReference type="HOGENOM" id="CLU_033172_1_2_6"/>
<dbReference type="UniPathway" id="UPA00078">
    <property type="reaction ID" value="UER00162"/>
</dbReference>
<dbReference type="GO" id="GO:0051537">
    <property type="term" value="F:2 iron, 2 sulfur cluster binding"/>
    <property type="evidence" value="ECO:0007669"/>
    <property type="project" value="UniProtKB-KW"/>
</dbReference>
<dbReference type="GO" id="GO:0051539">
    <property type="term" value="F:4 iron, 4 sulfur cluster binding"/>
    <property type="evidence" value="ECO:0007669"/>
    <property type="project" value="UniProtKB-KW"/>
</dbReference>
<dbReference type="GO" id="GO:0004076">
    <property type="term" value="F:biotin synthase activity"/>
    <property type="evidence" value="ECO:0007669"/>
    <property type="project" value="UniProtKB-UniRule"/>
</dbReference>
<dbReference type="GO" id="GO:0005506">
    <property type="term" value="F:iron ion binding"/>
    <property type="evidence" value="ECO:0007669"/>
    <property type="project" value="UniProtKB-UniRule"/>
</dbReference>
<dbReference type="GO" id="GO:0009102">
    <property type="term" value="P:biotin biosynthetic process"/>
    <property type="evidence" value="ECO:0007669"/>
    <property type="project" value="UniProtKB-UniRule"/>
</dbReference>
<dbReference type="CDD" id="cd01335">
    <property type="entry name" value="Radical_SAM"/>
    <property type="match status" value="1"/>
</dbReference>
<dbReference type="FunFam" id="3.20.20.70:FF:000011">
    <property type="entry name" value="Biotin synthase"/>
    <property type="match status" value="1"/>
</dbReference>
<dbReference type="Gene3D" id="3.20.20.70">
    <property type="entry name" value="Aldolase class I"/>
    <property type="match status" value="1"/>
</dbReference>
<dbReference type="HAMAP" id="MF_01694">
    <property type="entry name" value="BioB"/>
    <property type="match status" value="1"/>
</dbReference>
<dbReference type="InterPro" id="IPR013785">
    <property type="entry name" value="Aldolase_TIM"/>
</dbReference>
<dbReference type="InterPro" id="IPR010722">
    <property type="entry name" value="BATS_dom"/>
</dbReference>
<dbReference type="InterPro" id="IPR002684">
    <property type="entry name" value="Biotin_synth/BioAB"/>
</dbReference>
<dbReference type="InterPro" id="IPR024177">
    <property type="entry name" value="Biotin_synthase"/>
</dbReference>
<dbReference type="InterPro" id="IPR006638">
    <property type="entry name" value="Elp3/MiaA/NifB-like_rSAM"/>
</dbReference>
<dbReference type="InterPro" id="IPR007197">
    <property type="entry name" value="rSAM"/>
</dbReference>
<dbReference type="NCBIfam" id="TIGR00433">
    <property type="entry name" value="bioB"/>
    <property type="match status" value="1"/>
</dbReference>
<dbReference type="PANTHER" id="PTHR22976">
    <property type="entry name" value="BIOTIN SYNTHASE"/>
    <property type="match status" value="1"/>
</dbReference>
<dbReference type="PANTHER" id="PTHR22976:SF2">
    <property type="entry name" value="BIOTIN SYNTHASE, MITOCHONDRIAL"/>
    <property type="match status" value="1"/>
</dbReference>
<dbReference type="Pfam" id="PF06968">
    <property type="entry name" value="BATS"/>
    <property type="match status" value="1"/>
</dbReference>
<dbReference type="Pfam" id="PF04055">
    <property type="entry name" value="Radical_SAM"/>
    <property type="match status" value="1"/>
</dbReference>
<dbReference type="PIRSF" id="PIRSF001619">
    <property type="entry name" value="Biotin_synth"/>
    <property type="match status" value="1"/>
</dbReference>
<dbReference type="SFLD" id="SFLDG01060">
    <property type="entry name" value="BATS_domain_containing"/>
    <property type="match status" value="1"/>
</dbReference>
<dbReference type="SFLD" id="SFLDF00272">
    <property type="entry name" value="biotin_synthase"/>
    <property type="match status" value="1"/>
</dbReference>
<dbReference type="SMART" id="SM00876">
    <property type="entry name" value="BATS"/>
    <property type="match status" value="1"/>
</dbReference>
<dbReference type="SMART" id="SM00729">
    <property type="entry name" value="Elp3"/>
    <property type="match status" value="1"/>
</dbReference>
<dbReference type="SUPFAM" id="SSF102114">
    <property type="entry name" value="Radical SAM enzymes"/>
    <property type="match status" value="1"/>
</dbReference>
<dbReference type="PROSITE" id="PS51918">
    <property type="entry name" value="RADICAL_SAM"/>
    <property type="match status" value="1"/>
</dbReference>
<gene>
    <name evidence="1" type="primary">bioB</name>
    <name type="ordered locus">PLES_04961</name>
</gene>
<comment type="function">
    <text evidence="1">Catalyzes the conversion of dethiobiotin (DTB) to biotin by the insertion of a sulfur atom into dethiobiotin via a radical-based mechanism.</text>
</comment>
<comment type="catalytic activity">
    <reaction evidence="1">
        <text>(4R,5S)-dethiobiotin + (sulfur carrier)-SH + 2 reduced [2Fe-2S]-[ferredoxin] + 2 S-adenosyl-L-methionine = (sulfur carrier)-H + biotin + 2 5'-deoxyadenosine + 2 L-methionine + 2 oxidized [2Fe-2S]-[ferredoxin]</text>
        <dbReference type="Rhea" id="RHEA:22060"/>
        <dbReference type="Rhea" id="RHEA-COMP:10000"/>
        <dbReference type="Rhea" id="RHEA-COMP:10001"/>
        <dbReference type="Rhea" id="RHEA-COMP:14737"/>
        <dbReference type="Rhea" id="RHEA-COMP:14739"/>
        <dbReference type="ChEBI" id="CHEBI:17319"/>
        <dbReference type="ChEBI" id="CHEBI:29917"/>
        <dbReference type="ChEBI" id="CHEBI:33737"/>
        <dbReference type="ChEBI" id="CHEBI:33738"/>
        <dbReference type="ChEBI" id="CHEBI:57586"/>
        <dbReference type="ChEBI" id="CHEBI:57844"/>
        <dbReference type="ChEBI" id="CHEBI:59789"/>
        <dbReference type="ChEBI" id="CHEBI:64428"/>
        <dbReference type="ChEBI" id="CHEBI:149473"/>
        <dbReference type="EC" id="2.8.1.6"/>
    </reaction>
</comment>
<comment type="cofactor">
    <cofactor evidence="1">
        <name>[4Fe-4S] cluster</name>
        <dbReference type="ChEBI" id="CHEBI:49883"/>
    </cofactor>
    <text evidence="1">Binds 1 [4Fe-4S] cluster. The cluster is coordinated with 3 cysteines and an exchangeable S-adenosyl-L-methionine.</text>
</comment>
<comment type="cofactor">
    <cofactor evidence="1">
        <name>[2Fe-2S] cluster</name>
        <dbReference type="ChEBI" id="CHEBI:190135"/>
    </cofactor>
    <text evidence="1">Binds 1 [2Fe-2S] cluster. The cluster is coordinated with 3 cysteines and 1 arginine.</text>
</comment>
<comment type="pathway">
    <text evidence="1">Cofactor biosynthesis; biotin biosynthesis; biotin from 7,8-diaminononanoate: step 2/2.</text>
</comment>
<comment type="subunit">
    <text evidence="1">Homodimer.</text>
</comment>
<comment type="similarity">
    <text evidence="1">Belongs to the radical SAM superfamily. Biotin synthase family.</text>
</comment>
<keyword id="KW-0001">2Fe-2S</keyword>
<keyword id="KW-0004">4Fe-4S</keyword>
<keyword id="KW-0093">Biotin biosynthesis</keyword>
<keyword id="KW-0408">Iron</keyword>
<keyword id="KW-0411">Iron-sulfur</keyword>
<keyword id="KW-0479">Metal-binding</keyword>
<keyword id="KW-0949">S-adenosyl-L-methionine</keyword>
<keyword id="KW-0808">Transferase</keyword>
<name>BIOB_PSEA8</name>
<evidence type="ECO:0000255" key="1">
    <source>
        <dbReference type="HAMAP-Rule" id="MF_01694"/>
    </source>
</evidence>
<evidence type="ECO:0000255" key="2">
    <source>
        <dbReference type="PROSITE-ProRule" id="PRU01266"/>
    </source>
</evidence>
<accession>B7V485</accession>
<feature type="chain" id="PRO_0000381553" description="Biotin synthase">
    <location>
        <begin position="1"/>
        <end position="352"/>
    </location>
</feature>
<feature type="domain" description="Radical SAM core" evidence="2">
    <location>
        <begin position="44"/>
        <end position="262"/>
    </location>
</feature>
<feature type="binding site" evidence="1">
    <location>
        <position position="59"/>
    </location>
    <ligand>
        <name>[4Fe-4S] cluster</name>
        <dbReference type="ChEBI" id="CHEBI:49883"/>
        <note>4Fe-4S-S-AdoMet</note>
    </ligand>
</feature>
<feature type="binding site" evidence="1">
    <location>
        <position position="63"/>
    </location>
    <ligand>
        <name>[4Fe-4S] cluster</name>
        <dbReference type="ChEBI" id="CHEBI:49883"/>
        <note>4Fe-4S-S-AdoMet</note>
    </ligand>
</feature>
<feature type="binding site" evidence="1">
    <location>
        <position position="66"/>
    </location>
    <ligand>
        <name>[4Fe-4S] cluster</name>
        <dbReference type="ChEBI" id="CHEBI:49883"/>
        <note>4Fe-4S-S-AdoMet</note>
    </ligand>
</feature>
<feature type="binding site" evidence="1">
    <location>
        <position position="103"/>
    </location>
    <ligand>
        <name>[2Fe-2S] cluster</name>
        <dbReference type="ChEBI" id="CHEBI:190135"/>
    </ligand>
</feature>
<feature type="binding site" evidence="1">
    <location>
        <position position="134"/>
    </location>
    <ligand>
        <name>[2Fe-2S] cluster</name>
        <dbReference type="ChEBI" id="CHEBI:190135"/>
    </ligand>
</feature>
<feature type="binding site" evidence="1">
    <location>
        <position position="194"/>
    </location>
    <ligand>
        <name>[2Fe-2S] cluster</name>
        <dbReference type="ChEBI" id="CHEBI:190135"/>
    </ligand>
</feature>
<feature type="binding site" evidence="1">
    <location>
        <position position="266"/>
    </location>
    <ligand>
        <name>[2Fe-2S] cluster</name>
        <dbReference type="ChEBI" id="CHEBI:190135"/>
    </ligand>
</feature>
<proteinExistence type="inferred from homology"/>